<comment type="function">
    <text evidence="1">Removes the formyl group from the N-terminal Met of newly synthesized proteins. Requires at least a dipeptide for an efficient rate of reaction. N-terminal L-methionine is a prerequisite for activity but the enzyme has broad specificity at other positions.</text>
</comment>
<comment type="catalytic activity">
    <reaction evidence="1">
        <text>N-terminal N-formyl-L-methionyl-[peptide] + H2O = N-terminal L-methionyl-[peptide] + formate</text>
        <dbReference type="Rhea" id="RHEA:24420"/>
        <dbReference type="Rhea" id="RHEA-COMP:10639"/>
        <dbReference type="Rhea" id="RHEA-COMP:10640"/>
        <dbReference type="ChEBI" id="CHEBI:15377"/>
        <dbReference type="ChEBI" id="CHEBI:15740"/>
        <dbReference type="ChEBI" id="CHEBI:49298"/>
        <dbReference type="ChEBI" id="CHEBI:64731"/>
        <dbReference type="EC" id="3.5.1.88"/>
    </reaction>
</comment>
<comment type="cofactor">
    <cofactor evidence="1">
        <name>Fe(2+)</name>
        <dbReference type="ChEBI" id="CHEBI:29033"/>
    </cofactor>
    <text evidence="1">Binds 1 Fe(2+) ion.</text>
</comment>
<comment type="similarity">
    <text evidence="1">Belongs to the polypeptide deformylase family.</text>
</comment>
<dbReference type="EC" id="3.5.1.88" evidence="1"/>
<dbReference type="EMBL" id="U00089">
    <property type="protein sequence ID" value="AAB96235.1"/>
    <property type="molecule type" value="Genomic_DNA"/>
</dbReference>
<dbReference type="PIR" id="S73913">
    <property type="entry name" value="S73913"/>
</dbReference>
<dbReference type="RefSeq" id="NP_109933.1">
    <property type="nucleotide sequence ID" value="NC_000912.1"/>
</dbReference>
<dbReference type="SMR" id="P75527"/>
<dbReference type="IntAct" id="P75527">
    <property type="interactions" value="1"/>
</dbReference>
<dbReference type="STRING" id="272634.MPN_245"/>
<dbReference type="EnsemblBacteria" id="AAB96235">
    <property type="protein sequence ID" value="AAB96235"/>
    <property type="gene ID" value="MPN_245"/>
</dbReference>
<dbReference type="KEGG" id="mpn:MPN_245"/>
<dbReference type="PATRIC" id="fig|272634.6.peg.264"/>
<dbReference type="HOGENOM" id="CLU_061901_4_0_14"/>
<dbReference type="OrthoDB" id="9784988at2"/>
<dbReference type="BioCyc" id="MPNE272634:G1GJ3-388-MONOMER"/>
<dbReference type="Proteomes" id="UP000000808">
    <property type="component" value="Chromosome"/>
</dbReference>
<dbReference type="GO" id="GO:0046872">
    <property type="term" value="F:metal ion binding"/>
    <property type="evidence" value="ECO:0007669"/>
    <property type="project" value="UniProtKB-KW"/>
</dbReference>
<dbReference type="GO" id="GO:0042586">
    <property type="term" value="F:peptide deformylase activity"/>
    <property type="evidence" value="ECO:0007669"/>
    <property type="project" value="UniProtKB-UniRule"/>
</dbReference>
<dbReference type="GO" id="GO:0043686">
    <property type="term" value="P:co-translational protein modification"/>
    <property type="evidence" value="ECO:0007669"/>
    <property type="project" value="TreeGrafter"/>
</dbReference>
<dbReference type="GO" id="GO:0006412">
    <property type="term" value="P:translation"/>
    <property type="evidence" value="ECO:0007669"/>
    <property type="project" value="UniProtKB-UniRule"/>
</dbReference>
<dbReference type="CDD" id="cd00487">
    <property type="entry name" value="Pep_deformylase"/>
    <property type="match status" value="1"/>
</dbReference>
<dbReference type="FunFam" id="3.90.45.10:FF:000002">
    <property type="entry name" value="Peptide deformylase"/>
    <property type="match status" value="1"/>
</dbReference>
<dbReference type="Gene3D" id="3.90.45.10">
    <property type="entry name" value="Peptide deformylase"/>
    <property type="match status" value="1"/>
</dbReference>
<dbReference type="HAMAP" id="MF_00163">
    <property type="entry name" value="Pep_deformylase"/>
    <property type="match status" value="1"/>
</dbReference>
<dbReference type="InterPro" id="IPR023635">
    <property type="entry name" value="Peptide_deformylase"/>
</dbReference>
<dbReference type="InterPro" id="IPR036821">
    <property type="entry name" value="Peptide_deformylase_sf"/>
</dbReference>
<dbReference type="NCBIfam" id="TIGR00079">
    <property type="entry name" value="pept_deformyl"/>
    <property type="match status" value="1"/>
</dbReference>
<dbReference type="PANTHER" id="PTHR10458">
    <property type="entry name" value="PEPTIDE DEFORMYLASE"/>
    <property type="match status" value="1"/>
</dbReference>
<dbReference type="PANTHER" id="PTHR10458:SF22">
    <property type="entry name" value="PEPTIDE DEFORMYLASE"/>
    <property type="match status" value="1"/>
</dbReference>
<dbReference type="Pfam" id="PF01327">
    <property type="entry name" value="Pep_deformylase"/>
    <property type="match status" value="1"/>
</dbReference>
<dbReference type="PIRSF" id="PIRSF004749">
    <property type="entry name" value="Pep_def"/>
    <property type="match status" value="1"/>
</dbReference>
<dbReference type="PRINTS" id="PR01576">
    <property type="entry name" value="PDEFORMYLASE"/>
</dbReference>
<dbReference type="SUPFAM" id="SSF56420">
    <property type="entry name" value="Peptide deformylase"/>
    <property type="match status" value="1"/>
</dbReference>
<protein>
    <recommendedName>
        <fullName evidence="1">Peptide deformylase</fullName>
        <shortName evidence="1">PDF</shortName>
        <ecNumber evidence="1">3.5.1.88</ecNumber>
    </recommendedName>
    <alternativeName>
        <fullName evidence="1">Polypeptide deformylase</fullName>
    </alternativeName>
</protein>
<organism>
    <name type="scientific">Mycoplasma pneumoniae (strain ATCC 29342 / M129 / Subtype 1)</name>
    <name type="common">Mycoplasmoides pneumoniae</name>
    <dbReference type="NCBI Taxonomy" id="272634"/>
    <lineage>
        <taxon>Bacteria</taxon>
        <taxon>Bacillati</taxon>
        <taxon>Mycoplasmatota</taxon>
        <taxon>Mycoplasmoidales</taxon>
        <taxon>Mycoplasmoidaceae</taxon>
        <taxon>Mycoplasmoides</taxon>
    </lineage>
</organism>
<gene>
    <name evidence="1" type="primary">def</name>
    <name type="ordered locus">MPN_245</name>
    <name type="ORF">MP587</name>
</gene>
<feature type="chain" id="PRO_0000082803" description="Peptide deformylase">
    <location>
        <begin position="1"/>
        <end position="216"/>
    </location>
</feature>
<feature type="active site" evidence="1">
    <location>
        <position position="179"/>
    </location>
</feature>
<feature type="binding site" evidence="1">
    <location>
        <position position="134"/>
    </location>
    <ligand>
        <name>Fe cation</name>
        <dbReference type="ChEBI" id="CHEBI:24875"/>
    </ligand>
</feature>
<feature type="binding site" evidence="1">
    <location>
        <position position="178"/>
    </location>
    <ligand>
        <name>Fe cation</name>
        <dbReference type="ChEBI" id="CHEBI:24875"/>
    </ligand>
</feature>
<feature type="binding site" evidence="1">
    <location>
        <position position="182"/>
    </location>
    <ligand>
        <name>Fe cation</name>
        <dbReference type="ChEBI" id="CHEBI:24875"/>
    </ligand>
</feature>
<sequence length="216" mass="24592">MTKILPVSTISIFRIILILPQINMELLPTKAWLVLDDVKEINEPTKPVQFPLDQASLDCIAKMMAYVDASYNGDAEKYGIIPGIGIAANQIGYWKQMFYIHLMDGGVEHKCLLINPKIINLSANKSFLKSGEGCLSVPKMHQGYVIRHEWITITGFDWLQQKEITITATGLFGMCLQHEFDHLQGRFYYHRINPLNPLFTNKEWKVINPALPSDSE</sequence>
<keyword id="KW-0378">Hydrolase</keyword>
<keyword id="KW-0408">Iron</keyword>
<keyword id="KW-0479">Metal-binding</keyword>
<keyword id="KW-0648">Protein biosynthesis</keyword>
<keyword id="KW-1185">Reference proteome</keyword>
<reference key="1">
    <citation type="journal article" date="1996" name="Nucleic Acids Res.">
        <title>Complete sequence analysis of the genome of the bacterium Mycoplasma pneumoniae.</title>
        <authorList>
            <person name="Himmelreich R."/>
            <person name="Hilbert H."/>
            <person name="Plagens H."/>
            <person name="Pirkl E."/>
            <person name="Li B.-C."/>
            <person name="Herrmann R."/>
        </authorList>
    </citation>
    <scope>NUCLEOTIDE SEQUENCE [LARGE SCALE GENOMIC DNA]</scope>
    <source>
        <strain>ATCC 29342 / M129 / Subtype 1</strain>
    </source>
</reference>
<accession>P75527</accession>
<name>DEF_MYCPN</name>
<evidence type="ECO:0000255" key="1">
    <source>
        <dbReference type="HAMAP-Rule" id="MF_00163"/>
    </source>
</evidence>
<proteinExistence type="inferred from homology"/>